<reference key="1">
    <citation type="journal article" date="2000" name="Proc. Natl. Acad. Sci. U.S.A.">
        <title>Genome sequence of Halobacterium species NRC-1.</title>
        <authorList>
            <person name="Ng W.V."/>
            <person name="Kennedy S.P."/>
            <person name="Mahairas G.G."/>
            <person name="Berquist B."/>
            <person name="Pan M."/>
            <person name="Shukla H.D."/>
            <person name="Lasky S.R."/>
            <person name="Baliga N.S."/>
            <person name="Thorsson V."/>
            <person name="Sbrogna J."/>
            <person name="Swartzell S."/>
            <person name="Weir D."/>
            <person name="Hall J."/>
            <person name="Dahl T.A."/>
            <person name="Welti R."/>
            <person name="Goo Y.A."/>
            <person name="Leithauser B."/>
            <person name="Keller K."/>
            <person name="Cruz R."/>
            <person name="Danson M.J."/>
            <person name="Hough D.W."/>
            <person name="Maddocks D.G."/>
            <person name="Jablonski P.E."/>
            <person name="Krebs M.P."/>
            <person name="Angevine C.M."/>
            <person name="Dale H."/>
            <person name="Isenbarger T.A."/>
            <person name="Peck R.F."/>
            <person name="Pohlschroder M."/>
            <person name="Spudich J.L."/>
            <person name="Jung K.-H."/>
            <person name="Alam M."/>
            <person name="Freitas T."/>
            <person name="Hou S."/>
            <person name="Daniels C.J."/>
            <person name="Dennis P.P."/>
            <person name="Omer A.D."/>
            <person name="Ebhardt H."/>
            <person name="Lowe T.M."/>
            <person name="Liang P."/>
            <person name="Riley M."/>
            <person name="Hood L."/>
            <person name="DasSarma S."/>
        </authorList>
    </citation>
    <scope>NUCLEOTIDE SEQUENCE [LARGE SCALE GENOMIC DNA]</scope>
    <source>
        <strain>ATCC 700922 / JCM 11081 / NRC-1</strain>
    </source>
</reference>
<protein>
    <recommendedName>
        <fullName evidence="1">Leucine--tRNA ligase</fullName>
        <ecNumber evidence="1">6.1.1.4</ecNumber>
    </recommendedName>
    <alternativeName>
        <fullName evidence="1">Leucyl-tRNA synthetase</fullName>
        <shortName evidence="1">LeuRS</shortName>
    </alternativeName>
</protein>
<accession>Q9HN72</accession>
<sequence>MGEQATYDHHAIEQHWQREWDDADVFRVPDDADDPEYVLAMFPYTSGQLHMGHVRNYAITDAFARYRRMDGEDVLHPMGWDSFGLPAENAANERDTNPREWTERCIDQMRDQFEALGFGYDWEREITTCDPDYYKWNQWLFTEFRDAGLVDRRAATVNWCPSCETVLADEQVEGDDELCWRCDTPVTERDLDQWFFETTAYADELLDGLDELDGWPSNVRDMQRNWVGRTDGVEVPFTVHTPDGDEDVVAFTTRVDTIHGATYFALAPDHPLAEAAADRDDDVAHFVEEVADPDGDEPQGVETEFTATNPATGAEIPVVVADFVLSDVGTGALMAVPAHDDRDHEFAQAHDLPVRQVVAPAGDEDADVEAAAYTADGVLVNAGDYTGLDSETAREELTADIDGAASAVQYQLRDWGVSRQRYWGTPIPIVHCESCGPVSVPDDDLPVELPEFVHTTGNPLDAAEDWKQTTCPDCGAPAVRETDTMDTFLDSSWYFLRFASPAFDDAPFDTQRANDWLPVDEYVGGDEHAVMHLLYSRFVTKAFADLDMLEHREPFAGLTTQGMVLGEDGTKMSKSKDNGVAPERIVDEYGADTARLFTLRAARPSKAFPWSEEGVRSSHTFLERLLSMARAVNADATADGDLDPAAEYVARETAATVQAATTHFDDMEFNRAVQAVDELVSLLVRYRDRDDAAPAVVARGVTAAVKLLAPIAPHVAEECWTALGGDGFVAEAAWPTPDRDVSDHDRATSLIEQTREDVRDIVDTAGIENPTGVDVVTAPEWMYDVLARAKAADGNVVGSVMSDQSLQQHGEDAADYAKDLAAQAPAFPDVLGPDGERDALGRAVWLLEAEFDAPVRVLAAEDAADSVANKAEPGRPAIHVDEADD</sequence>
<keyword id="KW-0030">Aminoacyl-tRNA synthetase</keyword>
<keyword id="KW-0067">ATP-binding</keyword>
<keyword id="KW-0963">Cytoplasm</keyword>
<keyword id="KW-0436">Ligase</keyword>
<keyword id="KW-0547">Nucleotide-binding</keyword>
<keyword id="KW-0648">Protein biosynthesis</keyword>
<keyword id="KW-1185">Reference proteome</keyword>
<dbReference type="EC" id="6.1.1.4" evidence="1"/>
<dbReference type="EMBL" id="AE004437">
    <property type="protein sequence ID" value="AAG20349.1"/>
    <property type="molecule type" value="Genomic_DNA"/>
</dbReference>
<dbReference type="PIR" id="A84373">
    <property type="entry name" value="A84373"/>
</dbReference>
<dbReference type="RefSeq" id="WP_010903650.1">
    <property type="nucleotide sequence ID" value="NC_002607.1"/>
</dbReference>
<dbReference type="SMR" id="Q9HN72"/>
<dbReference type="STRING" id="64091.VNG_2223G"/>
<dbReference type="PaxDb" id="64091-VNG_2223G"/>
<dbReference type="GeneID" id="68694780"/>
<dbReference type="KEGG" id="hal:VNG_2223G"/>
<dbReference type="PATRIC" id="fig|64091.14.peg.1709"/>
<dbReference type="HOGENOM" id="CLU_004427_0_0_2"/>
<dbReference type="InParanoid" id="Q9HN72"/>
<dbReference type="OrthoDB" id="23906at2157"/>
<dbReference type="PhylomeDB" id="Q9HN72"/>
<dbReference type="Proteomes" id="UP000000554">
    <property type="component" value="Chromosome"/>
</dbReference>
<dbReference type="GO" id="GO:0005737">
    <property type="term" value="C:cytoplasm"/>
    <property type="evidence" value="ECO:0007669"/>
    <property type="project" value="UniProtKB-SubCell"/>
</dbReference>
<dbReference type="GO" id="GO:0002161">
    <property type="term" value="F:aminoacyl-tRNA deacylase activity"/>
    <property type="evidence" value="ECO:0007669"/>
    <property type="project" value="InterPro"/>
</dbReference>
<dbReference type="GO" id="GO:0005524">
    <property type="term" value="F:ATP binding"/>
    <property type="evidence" value="ECO:0007669"/>
    <property type="project" value="UniProtKB-KW"/>
</dbReference>
<dbReference type="GO" id="GO:0004823">
    <property type="term" value="F:leucine-tRNA ligase activity"/>
    <property type="evidence" value="ECO:0000318"/>
    <property type="project" value="GO_Central"/>
</dbReference>
<dbReference type="GO" id="GO:0006429">
    <property type="term" value="P:leucyl-tRNA aminoacylation"/>
    <property type="evidence" value="ECO:0000318"/>
    <property type="project" value="GO_Central"/>
</dbReference>
<dbReference type="CDD" id="cd07958">
    <property type="entry name" value="Anticodon_Ia_Leu_BEm"/>
    <property type="match status" value="1"/>
</dbReference>
<dbReference type="CDD" id="cd00812">
    <property type="entry name" value="LeuRS_core"/>
    <property type="match status" value="1"/>
</dbReference>
<dbReference type="FunFam" id="1.10.730.10:FF:000002">
    <property type="entry name" value="Leucine--tRNA ligase"/>
    <property type="match status" value="1"/>
</dbReference>
<dbReference type="FunFam" id="3.40.50.620:FF:000003">
    <property type="entry name" value="Leucine--tRNA ligase"/>
    <property type="match status" value="1"/>
</dbReference>
<dbReference type="FunFam" id="3.40.50.620:FF:000056">
    <property type="entry name" value="Leucine--tRNA ligase"/>
    <property type="match status" value="1"/>
</dbReference>
<dbReference type="Gene3D" id="3.30.2320.20">
    <property type="entry name" value="Class I aminoacyl-tRNA synthetases (RS)"/>
    <property type="match status" value="1"/>
</dbReference>
<dbReference type="Gene3D" id="3.40.50.620">
    <property type="entry name" value="HUPs"/>
    <property type="match status" value="2"/>
</dbReference>
<dbReference type="Gene3D" id="1.10.730.10">
    <property type="entry name" value="Isoleucyl-tRNA Synthetase, Domain 1"/>
    <property type="match status" value="1"/>
</dbReference>
<dbReference type="Gene3D" id="1.10.10.720">
    <property type="entry name" value="leucyl-tRNA synthetase"/>
    <property type="match status" value="1"/>
</dbReference>
<dbReference type="Gene3D" id="3.90.740.10">
    <property type="entry name" value="Valyl/Leucyl/Isoleucyl-tRNA synthetase, editing domain"/>
    <property type="match status" value="1"/>
</dbReference>
<dbReference type="HAMAP" id="MF_00049_B">
    <property type="entry name" value="Leu_tRNA_synth_B"/>
    <property type="match status" value="1"/>
</dbReference>
<dbReference type="InterPro" id="IPR001412">
    <property type="entry name" value="aa-tRNA-synth_I_CS"/>
</dbReference>
<dbReference type="InterPro" id="IPR002300">
    <property type="entry name" value="aa-tRNA-synth_Ia"/>
</dbReference>
<dbReference type="InterPro" id="IPR002302">
    <property type="entry name" value="Leu-tRNA-ligase"/>
</dbReference>
<dbReference type="InterPro" id="IPR025709">
    <property type="entry name" value="Leu_tRNA-synth_edit"/>
</dbReference>
<dbReference type="InterPro" id="IPR013155">
    <property type="entry name" value="M/V/L/I-tRNA-synth_anticd-bd"/>
</dbReference>
<dbReference type="InterPro" id="IPR015413">
    <property type="entry name" value="Methionyl/Leucyl_tRNA_Synth"/>
</dbReference>
<dbReference type="InterPro" id="IPR014729">
    <property type="entry name" value="Rossmann-like_a/b/a_fold"/>
</dbReference>
<dbReference type="InterPro" id="IPR009080">
    <property type="entry name" value="tRNAsynth_Ia_anticodon-bd"/>
</dbReference>
<dbReference type="InterPro" id="IPR009008">
    <property type="entry name" value="Val/Leu/Ile-tRNA-synth_edit"/>
</dbReference>
<dbReference type="NCBIfam" id="TIGR00396">
    <property type="entry name" value="leuS_bact"/>
    <property type="match status" value="1"/>
</dbReference>
<dbReference type="PANTHER" id="PTHR43740:SF2">
    <property type="entry name" value="LEUCINE--TRNA LIGASE, MITOCHONDRIAL"/>
    <property type="match status" value="1"/>
</dbReference>
<dbReference type="PANTHER" id="PTHR43740">
    <property type="entry name" value="LEUCYL-TRNA SYNTHETASE"/>
    <property type="match status" value="1"/>
</dbReference>
<dbReference type="Pfam" id="PF08264">
    <property type="entry name" value="Anticodon_1"/>
    <property type="match status" value="1"/>
</dbReference>
<dbReference type="Pfam" id="PF00133">
    <property type="entry name" value="tRNA-synt_1"/>
    <property type="match status" value="1"/>
</dbReference>
<dbReference type="Pfam" id="PF13603">
    <property type="entry name" value="tRNA-synt_1_2"/>
    <property type="match status" value="1"/>
</dbReference>
<dbReference type="Pfam" id="PF09334">
    <property type="entry name" value="tRNA-synt_1g"/>
    <property type="match status" value="1"/>
</dbReference>
<dbReference type="PRINTS" id="PR00985">
    <property type="entry name" value="TRNASYNTHLEU"/>
</dbReference>
<dbReference type="SUPFAM" id="SSF47323">
    <property type="entry name" value="Anticodon-binding domain of a subclass of class I aminoacyl-tRNA synthetases"/>
    <property type="match status" value="1"/>
</dbReference>
<dbReference type="SUPFAM" id="SSF52374">
    <property type="entry name" value="Nucleotidylyl transferase"/>
    <property type="match status" value="1"/>
</dbReference>
<dbReference type="SUPFAM" id="SSF50677">
    <property type="entry name" value="ValRS/IleRS/LeuRS editing domain"/>
    <property type="match status" value="1"/>
</dbReference>
<dbReference type="PROSITE" id="PS00178">
    <property type="entry name" value="AA_TRNA_LIGASE_I"/>
    <property type="match status" value="1"/>
</dbReference>
<proteinExistence type="inferred from homology"/>
<gene>
    <name evidence="1" type="primary">leuS</name>
    <name type="ordered locus">VNG_2223G</name>
</gene>
<comment type="catalytic activity">
    <reaction evidence="1">
        <text>tRNA(Leu) + L-leucine + ATP = L-leucyl-tRNA(Leu) + AMP + diphosphate</text>
        <dbReference type="Rhea" id="RHEA:11688"/>
        <dbReference type="Rhea" id="RHEA-COMP:9613"/>
        <dbReference type="Rhea" id="RHEA-COMP:9622"/>
        <dbReference type="ChEBI" id="CHEBI:30616"/>
        <dbReference type="ChEBI" id="CHEBI:33019"/>
        <dbReference type="ChEBI" id="CHEBI:57427"/>
        <dbReference type="ChEBI" id="CHEBI:78442"/>
        <dbReference type="ChEBI" id="CHEBI:78494"/>
        <dbReference type="ChEBI" id="CHEBI:456215"/>
        <dbReference type="EC" id="6.1.1.4"/>
    </reaction>
</comment>
<comment type="subcellular location">
    <subcellularLocation>
        <location evidence="1">Cytoplasm</location>
    </subcellularLocation>
</comment>
<comment type="similarity">
    <text evidence="1">Belongs to the class-I aminoacyl-tRNA synthetase family.</text>
</comment>
<feature type="chain" id="PRO_0000152129" description="Leucine--tRNA ligase">
    <location>
        <begin position="1"/>
        <end position="885"/>
    </location>
</feature>
<feature type="region of interest" description="Disordered" evidence="2">
    <location>
        <begin position="866"/>
        <end position="885"/>
    </location>
</feature>
<feature type="short sequence motif" description="'HIGH' region">
    <location>
        <begin position="43"/>
        <end position="53"/>
    </location>
</feature>
<feature type="short sequence motif" description="'KMSKS' region">
    <location>
        <begin position="571"/>
        <end position="575"/>
    </location>
</feature>
<feature type="binding site" evidence="1">
    <location>
        <position position="574"/>
    </location>
    <ligand>
        <name>ATP</name>
        <dbReference type="ChEBI" id="CHEBI:30616"/>
    </ligand>
</feature>
<organism>
    <name type="scientific">Halobacterium salinarum (strain ATCC 700922 / JCM 11081 / NRC-1)</name>
    <name type="common">Halobacterium halobium</name>
    <dbReference type="NCBI Taxonomy" id="64091"/>
    <lineage>
        <taxon>Archaea</taxon>
        <taxon>Methanobacteriati</taxon>
        <taxon>Methanobacteriota</taxon>
        <taxon>Stenosarchaea group</taxon>
        <taxon>Halobacteria</taxon>
        <taxon>Halobacteriales</taxon>
        <taxon>Halobacteriaceae</taxon>
        <taxon>Halobacterium</taxon>
        <taxon>Halobacterium salinarum NRC-34001</taxon>
    </lineage>
</organism>
<evidence type="ECO:0000255" key="1">
    <source>
        <dbReference type="HAMAP-Rule" id="MF_00049"/>
    </source>
</evidence>
<evidence type="ECO:0000256" key="2">
    <source>
        <dbReference type="SAM" id="MobiDB-lite"/>
    </source>
</evidence>
<name>SYL_HALSA</name>